<accession>Q6R2J8</accession>
<accession>O65461</accession>
<reference key="1">
    <citation type="journal article" date="2007" name="BMC Plant Biol.">
        <title>Molecular characterisation of the STRUBBELIG-RECEPTOR FAMILY of genes encoding putative leucine-rich repeat receptor-like kinases in Arabidopsis thaliana.</title>
        <authorList>
            <person name="Eyueboglu B."/>
            <person name="Pfister K."/>
            <person name="Haberer G."/>
            <person name="Chevalier D."/>
            <person name="Fuchs A."/>
            <person name="Mayer K.F.X."/>
            <person name="Schneitz K."/>
        </authorList>
    </citation>
    <scope>NUCLEOTIDE SEQUENCE [MRNA]</scope>
    <scope>FUNCTION</scope>
    <scope>TISSUE SPECIFICITY</scope>
    <scope>DISRUPTION PHENOTYPE</scope>
    <source>
        <strain>cv. Columbia</strain>
    </source>
</reference>
<reference key="2">
    <citation type="journal article" date="1999" name="Nature">
        <title>Sequence and analysis of chromosome 4 of the plant Arabidopsis thaliana.</title>
        <authorList>
            <person name="Mayer K.F.X."/>
            <person name="Schueller C."/>
            <person name="Wambutt R."/>
            <person name="Murphy G."/>
            <person name="Volckaert G."/>
            <person name="Pohl T."/>
            <person name="Duesterhoeft A."/>
            <person name="Stiekema W."/>
            <person name="Entian K.-D."/>
            <person name="Terryn N."/>
            <person name="Harris B."/>
            <person name="Ansorge W."/>
            <person name="Brandt P."/>
            <person name="Grivell L.A."/>
            <person name="Rieger M."/>
            <person name="Weichselgartner M."/>
            <person name="de Simone V."/>
            <person name="Obermaier B."/>
            <person name="Mache R."/>
            <person name="Mueller M."/>
            <person name="Kreis M."/>
            <person name="Delseny M."/>
            <person name="Puigdomenech P."/>
            <person name="Watson M."/>
            <person name="Schmidtheini T."/>
            <person name="Reichert B."/>
            <person name="Portetelle D."/>
            <person name="Perez-Alonso M."/>
            <person name="Boutry M."/>
            <person name="Bancroft I."/>
            <person name="Vos P."/>
            <person name="Hoheisel J."/>
            <person name="Zimmermann W."/>
            <person name="Wedler H."/>
            <person name="Ridley P."/>
            <person name="Langham S.-A."/>
            <person name="McCullagh B."/>
            <person name="Bilham L."/>
            <person name="Robben J."/>
            <person name="van der Schueren J."/>
            <person name="Grymonprez B."/>
            <person name="Chuang Y.-J."/>
            <person name="Vandenbussche F."/>
            <person name="Braeken M."/>
            <person name="Weltjens I."/>
            <person name="Voet M."/>
            <person name="Bastiaens I."/>
            <person name="Aert R."/>
            <person name="Defoor E."/>
            <person name="Weitzenegger T."/>
            <person name="Bothe G."/>
            <person name="Ramsperger U."/>
            <person name="Hilbert H."/>
            <person name="Braun M."/>
            <person name="Holzer E."/>
            <person name="Brandt A."/>
            <person name="Peters S."/>
            <person name="van Staveren M."/>
            <person name="Dirkse W."/>
            <person name="Mooijman P."/>
            <person name="Klein Lankhorst R."/>
            <person name="Rose M."/>
            <person name="Hauf J."/>
            <person name="Koetter P."/>
            <person name="Berneiser S."/>
            <person name="Hempel S."/>
            <person name="Feldpausch M."/>
            <person name="Lamberth S."/>
            <person name="Van den Daele H."/>
            <person name="De Keyser A."/>
            <person name="Buysshaert C."/>
            <person name="Gielen J."/>
            <person name="Villarroel R."/>
            <person name="De Clercq R."/>
            <person name="van Montagu M."/>
            <person name="Rogers J."/>
            <person name="Cronin A."/>
            <person name="Quail M.A."/>
            <person name="Bray-Allen S."/>
            <person name="Clark L."/>
            <person name="Doggett J."/>
            <person name="Hall S."/>
            <person name="Kay M."/>
            <person name="Lennard N."/>
            <person name="McLay K."/>
            <person name="Mayes R."/>
            <person name="Pettett A."/>
            <person name="Rajandream M.A."/>
            <person name="Lyne M."/>
            <person name="Benes V."/>
            <person name="Rechmann S."/>
            <person name="Borkova D."/>
            <person name="Bloecker H."/>
            <person name="Scharfe M."/>
            <person name="Grimm M."/>
            <person name="Loehnert T.-H."/>
            <person name="Dose S."/>
            <person name="de Haan M."/>
            <person name="Maarse A.C."/>
            <person name="Schaefer M."/>
            <person name="Mueller-Auer S."/>
            <person name="Gabel C."/>
            <person name="Fuchs M."/>
            <person name="Fartmann B."/>
            <person name="Granderath K."/>
            <person name="Dauner D."/>
            <person name="Herzl A."/>
            <person name="Neumann S."/>
            <person name="Argiriou A."/>
            <person name="Vitale D."/>
            <person name="Liguori R."/>
            <person name="Piravandi E."/>
            <person name="Massenet O."/>
            <person name="Quigley F."/>
            <person name="Clabauld G."/>
            <person name="Muendlein A."/>
            <person name="Felber R."/>
            <person name="Schnabl S."/>
            <person name="Hiller R."/>
            <person name="Schmidt W."/>
            <person name="Lecharny A."/>
            <person name="Aubourg S."/>
            <person name="Chefdor F."/>
            <person name="Cooke R."/>
            <person name="Berger C."/>
            <person name="Monfort A."/>
            <person name="Casacuberta E."/>
            <person name="Gibbons T."/>
            <person name="Weber N."/>
            <person name="Vandenbol M."/>
            <person name="Bargues M."/>
            <person name="Terol J."/>
            <person name="Torres A."/>
            <person name="Perez-Perez A."/>
            <person name="Purnelle B."/>
            <person name="Bent E."/>
            <person name="Johnson S."/>
            <person name="Tacon D."/>
            <person name="Jesse T."/>
            <person name="Heijnen L."/>
            <person name="Schwarz S."/>
            <person name="Scholler P."/>
            <person name="Heber S."/>
            <person name="Francs P."/>
            <person name="Bielke C."/>
            <person name="Frishman D."/>
            <person name="Haase D."/>
            <person name="Lemcke K."/>
            <person name="Mewes H.-W."/>
            <person name="Stocker S."/>
            <person name="Zaccaria P."/>
            <person name="Bevan M."/>
            <person name="Wilson R.K."/>
            <person name="de la Bastide M."/>
            <person name="Habermann K."/>
            <person name="Parnell L."/>
            <person name="Dedhia N."/>
            <person name="Gnoj L."/>
            <person name="Schutz K."/>
            <person name="Huang E."/>
            <person name="Spiegel L."/>
            <person name="Sekhon M."/>
            <person name="Murray J."/>
            <person name="Sheet P."/>
            <person name="Cordes M."/>
            <person name="Abu-Threideh J."/>
            <person name="Stoneking T."/>
            <person name="Kalicki J."/>
            <person name="Graves T."/>
            <person name="Harmon G."/>
            <person name="Edwards J."/>
            <person name="Latreille P."/>
            <person name="Courtney L."/>
            <person name="Cloud J."/>
            <person name="Abbott A."/>
            <person name="Scott K."/>
            <person name="Johnson D."/>
            <person name="Minx P."/>
            <person name="Bentley D."/>
            <person name="Fulton B."/>
            <person name="Miller N."/>
            <person name="Greco T."/>
            <person name="Kemp K."/>
            <person name="Kramer J."/>
            <person name="Fulton L."/>
            <person name="Mardis E."/>
            <person name="Dante M."/>
            <person name="Pepin K."/>
            <person name="Hillier L.W."/>
            <person name="Nelson J."/>
            <person name="Spieth J."/>
            <person name="Ryan E."/>
            <person name="Andrews S."/>
            <person name="Geisel C."/>
            <person name="Layman D."/>
            <person name="Du H."/>
            <person name="Ali J."/>
            <person name="Berghoff A."/>
            <person name="Jones K."/>
            <person name="Drone K."/>
            <person name="Cotton M."/>
            <person name="Joshu C."/>
            <person name="Antonoiu B."/>
            <person name="Zidanic M."/>
            <person name="Strong C."/>
            <person name="Sun H."/>
            <person name="Lamar B."/>
            <person name="Yordan C."/>
            <person name="Ma P."/>
            <person name="Zhong J."/>
            <person name="Preston R."/>
            <person name="Vil D."/>
            <person name="Shekher M."/>
            <person name="Matero A."/>
            <person name="Shah R."/>
            <person name="Swaby I.K."/>
            <person name="O'Shaughnessy A."/>
            <person name="Rodriguez M."/>
            <person name="Hoffman J."/>
            <person name="Till S."/>
            <person name="Granat S."/>
            <person name="Shohdy N."/>
            <person name="Hasegawa A."/>
            <person name="Hameed A."/>
            <person name="Lodhi M."/>
            <person name="Johnson A."/>
            <person name="Chen E."/>
            <person name="Marra M.A."/>
            <person name="Martienssen R."/>
            <person name="McCombie W.R."/>
        </authorList>
    </citation>
    <scope>NUCLEOTIDE SEQUENCE [LARGE SCALE GENOMIC DNA]</scope>
    <source>
        <strain>cv. Columbia</strain>
    </source>
</reference>
<reference key="3">
    <citation type="journal article" date="2017" name="Plant J.">
        <title>Araport11: a complete reannotation of the Arabidopsis thaliana reference genome.</title>
        <authorList>
            <person name="Cheng C.Y."/>
            <person name="Krishnakumar V."/>
            <person name="Chan A.P."/>
            <person name="Thibaud-Nissen F."/>
            <person name="Schobel S."/>
            <person name="Town C.D."/>
        </authorList>
    </citation>
    <scope>GENOME REANNOTATION</scope>
    <source>
        <strain>cv. Columbia</strain>
    </source>
</reference>
<reference key="4">
    <citation type="submission" date="2006-12" db="EMBL/GenBank/DDBJ databases">
        <title>Arabidopsis ORF clones.</title>
        <authorList>
            <person name="Bautista V.R."/>
            <person name="Kim C.J."/>
            <person name="Chen H."/>
            <person name="Quinitio C."/>
            <person name="Ecker J.R."/>
        </authorList>
    </citation>
    <scope>NUCLEOTIDE SEQUENCE [LARGE SCALE MRNA] OF 366-703</scope>
    <source>
        <strain>cv. Columbia</strain>
    </source>
</reference>
<gene>
    <name type="primary">SRF8</name>
    <name type="ordered locus">At4g22130</name>
    <name type="ORF">F1N20.230</name>
</gene>
<evidence type="ECO:0000255" key="1"/>
<evidence type="ECO:0000255" key="2">
    <source>
        <dbReference type="PROSITE-ProRule" id="PRU00159"/>
    </source>
</evidence>
<evidence type="ECO:0000256" key="3">
    <source>
        <dbReference type="SAM" id="MobiDB-lite"/>
    </source>
</evidence>
<evidence type="ECO:0000269" key="4">
    <source>
    </source>
</evidence>
<evidence type="ECO:0000305" key="5"/>
<organism>
    <name type="scientific">Arabidopsis thaliana</name>
    <name type="common">Mouse-ear cress</name>
    <dbReference type="NCBI Taxonomy" id="3702"/>
    <lineage>
        <taxon>Eukaryota</taxon>
        <taxon>Viridiplantae</taxon>
        <taxon>Streptophyta</taxon>
        <taxon>Embryophyta</taxon>
        <taxon>Tracheophyta</taxon>
        <taxon>Spermatophyta</taxon>
        <taxon>Magnoliopsida</taxon>
        <taxon>eudicotyledons</taxon>
        <taxon>Gunneridae</taxon>
        <taxon>Pentapetalae</taxon>
        <taxon>rosids</taxon>
        <taxon>malvids</taxon>
        <taxon>Brassicales</taxon>
        <taxon>Brassicaceae</taxon>
        <taxon>Camelineae</taxon>
        <taxon>Arabidopsis</taxon>
    </lineage>
</organism>
<sequence>MAIGDRAMFTVLLLFIASISGFSVVRCVTDPSDVQALQVLYTSLNSPSQLTNWKNGGGDPCGESWKGITCEGSAVVTIDISDLGVSGTLGYLLSDLKSLRKLDVSGNSIHDTLPYQLPPNLTSLNLARNNLSGNLPYSISAMGSLSYMNVSGNSLTMSIGDIFADHKSLATLDLSHNNFSGDLPSSLSTVSTLSVLYVQNNQLTGSIDVLSGLPLKTLNVANNHFNGSIPKELSSIQTLIYDGNSFDNVPASPQPERPGKKETPSGSKKPKIGSEEKSSDSGKGLSGGVVTGIVFGSLFVAGIIALVLYLCLHKKKRKVRGSTRASQRSLPLSGTPEVQEQRVKSVASVADLKSSPAEKVTVDRVMKNGSISRIRSPITASQYTVSSLQVATNSFSQENIIGEGSLGRVYRAEFPNGKIMAIKKIDNAALSLQEEDNFLEAVSNMSRLRHPNIVPLAGYCTEHGQRLLVYEYVGNGNLDDTLHTNDDRSMNLTWNARVKVALGTAKALEYLHEVCLPSIVHRNFKSANILLDEELNPHLSDSGLAALTPNTERQVSTQVVGSFGYSAPEFALSGIYTVKSDVYTFGVVMLELLTGRKPLDSSRTRAEQSLVRWATPQLHDIDALSKMVDPSLNGMYPAKSLSRFADIIALCIQPEPEFRPPMSEVVQQLVRLVQRASVVKRRSSDDTGFSYRTPEHEHVDISF</sequence>
<keyword id="KW-0025">Alternative splicing</keyword>
<keyword id="KW-0067">ATP-binding</keyword>
<keyword id="KW-0325">Glycoprotein</keyword>
<keyword id="KW-0433">Leucine-rich repeat</keyword>
<keyword id="KW-0472">Membrane</keyword>
<keyword id="KW-0547">Nucleotide-binding</keyword>
<keyword id="KW-0675">Receptor</keyword>
<keyword id="KW-1185">Reference proteome</keyword>
<keyword id="KW-0677">Repeat</keyword>
<keyword id="KW-0732">Signal</keyword>
<keyword id="KW-0812">Transmembrane</keyword>
<keyword id="KW-1133">Transmembrane helix</keyword>
<comment type="interaction">
    <interactant intactId="EBI-16941202">
        <id>Q6R2J8</id>
    </interactant>
    <interactant intactId="EBI-20655099">
        <id>Q0WVM4</id>
        <label>At2g23950</label>
    </interactant>
    <organismsDiffer>false</organismsDiffer>
    <experiments>2</experiments>
</comment>
<comment type="interaction">
    <interactant intactId="EBI-16941202">
        <id>Q6R2J8</id>
    </interactant>
    <interactant intactId="EBI-16902452">
        <id>Q8VYT3</id>
        <label>At4g30520</label>
    </interactant>
    <organismsDiffer>false</organismsDiffer>
    <experiments>2</experiments>
</comment>
<comment type="subcellular location">
    <subcellularLocation>
        <location evidence="5">Membrane</location>
        <topology evidence="5">Single-pass membrane protein</topology>
    </subcellularLocation>
</comment>
<comment type="alternative products">
    <event type="alternative splicing"/>
    <isoform>
        <id>Q6R2J8-1</id>
        <name>1</name>
        <sequence type="displayed"/>
    </isoform>
    <text>A number of isoforms are produced. According to EST sequences.</text>
</comment>
<comment type="tissue specificity">
    <text evidence="4">Expressed in seedlings, roots, stems, leaves, flowers and siliques.</text>
</comment>
<comment type="domain">
    <text>The protein kinase domain is predicted to be catalytically inactive.</text>
</comment>
<comment type="disruption phenotype">
    <text evidence="4">No visible phenotype.</text>
</comment>
<comment type="miscellaneous">
    <text>Cannot functionally replace STRUBBELIG.</text>
</comment>
<comment type="miscellaneous">
    <text>Over-expression of SRF8 may lead to seedling lethality in both cv. Landsberg and cv. Columbia.</text>
</comment>
<comment type="similarity">
    <text evidence="2">Belongs to the protein kinase superfamily. Ser/Thr protein kinase family.</text>
</comment>
<comment type="sequence caution" evidence="5">
    <conflict type="erroneous gene model prediction">
        <sequence resource="EMBL-CDS" id="CAA18116"/>
    </conflict>
</comment>
<comment type="sequence caution" evidence="5">
    <conflict type="erroneous gene model prediction">
        <sequence resource="EMBL-CDS" id="CAB79168"/>
    </conflict>
</comment>
<proteinExistence type="evidence at protein level"/>
<dbReference type="EMBL" id="AY518293">
    <property type="protein sequence ID" value="AAR99876.1"/>
    <property type="molecule type" value="mRNA"/>
</dbReference>
<dbReference type="EMBL" id="AL022140">
    <property type="protein sequence ID" value="CAA18116.1"/>
    <property type="status" value="ALT_SEQ"/>
    <property type="molecule type" value="Genomic_DNA"/>
</dbReference>
<dbReference type="EMBL" id="AL161556">
    <property type="protein sequence ID" value="CAB79168.1"/>
    <property type="status" value="ALT_SEQ"/>
    <property type="molecule type" value="Genomic_DNA"/>
</dbReference>
<dbReference type="EMBL" id="CP002687">
    <property type="protein sequence ID" value="AEE84560.1"/>
    <property type="molecule type" value="Genomic_DNA"/>
</dbReference>
<dbReference type="EMBL" id="BT029473">
    <property type="protein sequence ID" value="ABL66730.1"/>
    <property type="molecule type" value="mRNA"/>
</dbReference>
<dbReference type="RefSeq" id="NP_193944.2">
    <molecule id="Q6R2J8-1"/>
    <property type="nucleotide sequence ID" value="NM_118334.5"/>
</dbReference>
<dbReference type="SMR" id="Q6R2J8"/>
<dbReference type="BioGRID" id="13591">
    <property type="interactions" value="60"/>
</dbReference>
<dbReference type="FunCoup" id="Q6R2J8">
    <property type="interactions" value="1279"/>
</dbReference>
<dbReference type="IntAct" id="Q6R2J8">
    <property type="interactions" value="61"/>
</dbReference>
<dbReference type="STRING" id="3702.Q6R2J8"/>
<dbReference type="GlyCosmos" id="Q6R2J8">
    <property type="glycosylation" value="5 sites, No reported glycans"/>
</dbReference>
<dbReference type="GlyGen" id="Q6R2J8">
    <property type="glycosylation" value="5 sites"/>
</dbReference>
<dbReference type="iPTMnet" id="Q6R2J8"/>
<dbReference type="PaxDb" id="3702-AT4G22130.1"/>
<dbReference type="ProteomicsDB" id="226869">
    <molecule id="Q6R2J8-1"/>
</dbReference>
<dbReference type="EnsemblPlants" id="AT4G22130.1">
    <molecule id="Q6R2J8-1"/>
    <property type="protein sequence ID" value="AT4G22130.1"/>
    <property type="gene ID" value="AT4G22130"/>
</dbReference>
<dbReference type="GeneID" id="828302"/>
<dbReference type="Gramene" id="AT4G22130.1">
    <molecule id="Q6R2J8-1"/>
    <property type="protein sequence ID" value="AT4G22130.1"/>
    <property type="gene ID" value="AT4G22130"/>
</dbReference>
<dbReference type="KEGG" id="ath:AT4G22130"/>
<dbReference type="Araport" id="AT4G22130"/>
<dbReference type="TAIR" id="AT4G22130">
    <property type="gene designation" value="SRF8"/>
</dbReference>
<dbReference type="eggNOG" id="KOG1187">
    <property type="taxonomic scope" value="Eukaryota"/>
</dbReference>
<dbReference type="InParanoid" id="Q6R2J8"/>
<dbReference type="OMA" id="VIQRSHY"/>
<dbReference type="OrthoDB" id="1055097at2759"/>
<dbReference type="PhylomeDB" id="Q6R2J8"/>
<dbReference type="PRO" id="PR:Q6R2J8"/>
<dbReference type="Proteomes" id="UP000006548">
    <property type="component" value="Chromosome 4"/>
</dbReference>
<dbReference type="ExpressionAtlas" id="Q6R2J8">
    <property type="expression patterns" value="baseline and differential"/>
</dbReference>
<dbReference type="GO" id="GO:0005886">
    <property type="term" value="C:plasma membrane"/>
    <property type="evidence" value="ECO:0007005"/>
    <property type="project" value="TAIR"/>
</dbReference>
<dbReference type="GO" id="GO:0005524">
    <property type="term" value="F:ATP binding"/>
    <property type="evidence" value="ECO:0007669"/>
    <property type="project" value="UniProtKB-KW"/>
</dbReference>
<dbReference type="GO" id="GO:0004672">
    <property type="term" value="F:protein kinase activity"/>
    <property type="evidence" value="ECO:0007669"/>
    <property type="project" value="InterPro"/>
</dbReference>
<dbReference type="CDD" id="cd14066">
    <property type="entry name" value="STKc_IRAK"/>
    <property type="match status" value="1"/>
</dbReference>
<dbReference type="FunFam" id="3.80.10.10:FF:000062">
    <property type="entry name" value="protein STRUBBELIG-RECEPTOR FAMILY 3"/>
    <property type="match status" value="1"/>
</dbReference>
<dbReference type="FunFam" id="3.30.200.20:FF:000125">
    <property type="entry name" value="Protein STRUBBELIG-RECEPTOR FAMILY 8"/>
    <property type="match status" value="1"/>
</dbReference>
<dbReference type="FunFam" id="1.10.510.10:FF:000095">
    <property type="entry name" value="protein STRUBBELIG-RECEPTOR FAMILY 8"/>
    <property type="match status" value="1"/>
</dbReference>
<dbReference type="Gene3D" id="3.30.200.20">
    <property type="entry name" value="Phosphorylase Kinase, domain 1"/>
    <property type="match status" value="1"/>
</dbReference>
<dbReference type="Gene3D" id="3.80.10.10">
    <property type="entry name" value="Ribonuclease Inhibitor"/>
    <property type="match status" value="1"/>
</dbReference>
<dbReference type="Gene3D" id="1.10.510.10">
    <property type="entry name" value="Transferase(Phosphotransferase) domain 1"/>
    <property type="match status" value="1"/>
</dbReference>
<dbReference type="InterPro" id="IPR011009">
    <property type="entry name" value="Kinase-like_dom_sf"/>
</dbReference>
<dbReference type="InterPro" id="IPR001611">
    <property type="entry name" value="Leu-rich_rpt"/>
</dbReference>
<dbReference type="InterPro" id="IPR032675">
    <property type="entry name" value="LRR_dom_sf"/>
</dbReference>
<dbReference type="InterPro" id="IPR013210">
    <property type="entry name" value="LRR_N_plant-typ"/>
</dbReference>
<dbReference type="InterPro" id="IPR046959">
    <property type="entry name" value="PRK1-6/SRF4-like"/>
</dbReference>
<dbReference type="InterPro" id="IPR000719">
    <property type="entry name" value="Prot_kinase_dom"/>
</dbReference>
<dbReference type="InterPro" id="IPR001245">
    <property type="entry name" value="Ser-Thr/Tyr_kinase_cat_dom"/>
</dbReference>
<dbReference type="PANTHER" id="PTHR48007">
    <property type="entry name" value="LEUCINE-RICH REPEAT RECEPTOR-LIKE PROTEIN KINASE PXC1"/>
    <property type="match status" value="1"/>
</dbReference>
<dbReference type="PANTHER" id="PTHR48007:SF34">
    <property type="entry name" value="PROTEIN STRUBBELIG-RECEPTOR FAMILY 8 ISOFORM X1"/>
    <property type="match status" value="1"/>
</dbReference>
<dbReference type="Pfam" id="PF00560">
    <property type="entry name" value="LRR_1"/>
    <property type="match status" value="1"/>
</dbReference>
<dbReference type="Pfam" id="PF13516">
    <property type="entry name" value="LRR_6"/>
    <property type="match status" value="1"/>
</dbReference>
<dbReference type="Pfam" id="PF13855">
    <property type="entry name" value="LRR_8"/>
    <property type="match status" value="1"/>
</dbReference>
<dbReference type="Pfam" id="PF08263">
    <property type="entry name" value="LRRNT_2"/>
    <property type="match status" value="1"/>
</dbReference>
<dbReference type="Pfam" id="PF07714">
    <property type="entry name" value="PK_Tyr_Ser-Thr"/>
    <property type="match status" value="1"/>
</dbReference>
<dbReference type="SUPFAM" id="SSF52058">
    <property type="entry name" value="L domain-like"/>
    <property type="match status" value="1"/>
</dbReference>
<dbReference type="SUPFAM" id="SSF56112">
    <property type="entry name" value="Protein kinase-like (PK-like)"/>
    <property type="match status" value="1"/>
</dbReference>
<dbReference type="PROSITE" id="PS50011">
    <property type="entry name" value="PROTEIN_KINASE_DOM"/>
    <property type="match status" value="1"/>
</dbReference>
<name>SRF8_ARATH</name>
<protein>
    <recommendedName>
        <fullName>Protein STRUBBELIG-RECEPTOR FAMILY 8</fullName>
    </recommendedName>
    <alternativeName>
        <fullName>Leucine-rich repeat receptor kinase-like protein SRF8</fullName>
    </alternativeName>
</protein>
<feature type="signal peptide" evidence="1">
    <location>
        <begin position="1"/>
        <end position="27"/>
    </location>
</feature>
<feature type="chain" id="PRO_0000311848" description="Protein STRUBBELIG-RECEPTOR FAMILY 8">
    <location>
        <begin position="28"/>
        <end position="703"/>
    </location>
</feature>
<feature type="topological domain" description="Extracellular" evidence="1">
    <location>
        <begin position="28"/>
        <end position="291"/>
    </location>
</feature>
<feature type="transmembrane region" description="Helical" evidence="1">
    <location>
        <begin position="292"/>
        <end position="312"/>
    </location>
</feature>
<feature type="topological domain" description="Cytoplasmic" evidence="1">
    <location>
        <begin position="313"/>
        <end position="703"/>
    </location>
</feature>
<feature type="repeat" description="LRR 1">
    <location>
        <begin position="96"/>
        <end position="120"/>
    </location>
</feature>
<feature type="repeat" description="LRR 2">
    <location>
        <begin position="122"/>
        <end position="142"/>
    </location>
</feature>
<feature type="repeat" description="LRR 3">
    <location>
        <begin position="143"/>
        <end position="165"/>
    </location>
</feature>
<feature type="repeat" description="LRR 4">
    <location>
        <begin position="166"/>
        <end position="190"/>
    </location>
</feature>
<feature type="repeat" description="LRR 5">
    <location>
        <begin position="192"/>
        <end position="212"/>
    </location>
</feature>
<feature type="repeat" description="LRR 6">
    <location>
        <begin position="213"/>
        <end position="233"/>
    </location>
</feature>
<feature type="repeat" description="LRR 7">
    <location>
        <begin position="234"/>
        <end position="256"/>
    </location>
</feature>
<feature type="domain" description="Protein kinase" evidence="2">
    <location>
        <begin position="395"/>
        <end position="672"/>
    </location>
</feature>
<feature type="region of interest" description="Disordered" evidence="3">
    <location>
        <begin position="247"/>
        <end position="284"/>
    </location>
</feature>
<feature type="binding site" evidence="2">
    <location>
        <begin position="401"/>
        <end position="409"/>
    </location>
    <ligand>
        <name>ATP</name>
        <dbReference type="ChEBI" id="CHEBI:30616"/>
    </ligand>
</feature>
<feature type="binding site" evidence="2">
    <location>
        <position position="423"/>
    </location>
    <ligand>
        <name>ATP</name>
        <dbReference type="ChEBI" id="CHEBI:30616"/>
    </ligand>
</feature>
<feature type="glycosylation site" description="N-linked (GlcNAc...) asparagine" evidence="1">
    <location>
        <position position="120"/>
    </location>
</feature>
<feature type="glycosylation site" description="N-linked (GlcNAc...) asparagine" evidence="1">
    <location>
        <position position="130"/>
    </location>
</feature>
<feature type="glycosylation site" description="N-linked (GlcNAc...) asparagine" evidence="1">
    <location>
        <position position="149"/>
    </location>
</feature>
<feature type="glycosylation site" description="N-linked (GlcNAc...) asparagine" evidence="1">
    <location>
        <position position="178"/>
    </location>
</feature>
<feature type="glycosylation site" description="N-linked (GlcNAc...) asparagine" evidence="1">
    <location>
        <position position="226"/>
    </location>
</feature>